<feature type="signal peptide" evidence="2">
    <location>
        <begin position="1"/>
        <end position="20"/>
    </location>
</feature>
<feature type="chain" id="PRO_0000422908" description="Hyphal wall protein 2">
    <location>
        <begin position="21"/>
        <end position="887"/>
    </location>
</feature>
<feature type="propeptide" id="PRO_0000422909" description="Removed in mature form" evidence="2">
    <location>
        <begin position="888"/>
        <end position="908"/>
    </location>
</feature>
<feature type="region of interest" description="Disordered" evidence="3">
    <location>
        <begin position="110"/>
        <end position="221"/>
    </location>
</feature>
<feature type="region of interest" description="Disordered" evidence="3">
    <location>
        <begin position="263"/>
        <end position="477"/>
    </location>
</feature>
<feature type="region of interest" description="Disordered" evidence="3">
    <location>
        <begin position="539"/>
        <end position="700"/>
    </location>
</feature>
<feature type="region of interest" description="Disordered" evidence="3">
    <location>
        <begin position="821"/>
        <end position="844"/>
    </location>
</feature>
<feature type="compositionally biased region" description="Low complexity" evidence="3">
    <location>
        <begin position="110"/>
        <end position="187"/>
    </location>
</feature>
<feature type="compositionally biased region" description="Low complexity" evidence="3">
    <location>
        <begin position="266"/>
        <end position="324"/>
    </location>
</feature>
<feature type="compositionally biased region" description="Low complexity" evidence="3">
    <location>
        <begin position="332"/>
        <end position="405"/>
    </location>
</feature>
<feature type="compositionally biased region" description="Polar residues" evidence="3">
    <location>
        <begin position="406"/>
        <end position="416"/>
    </location>
</feature>
<feature type="compositionally biased region" description="Low complexity" evidence="3">
    <location>
        <begin position="422"/>
        <end position="477"/>
    </location>
</feature>
<feature type="compositionally biased region" description="Low complexity" evidence="3">
    <location>
        <begin position="539"/>
        <end position="608"/>
    </location>
</feature>
<feature type="compositionally biased region" description="Polar residues" evidence="3">
    <location>
        <begin position="624"/>
        <end position="638"/>
    </location>
</feature>
<feature type="compositionally biased region" description="Low complexity" evidence="3">
    <location>
        <begin position="639"/>
        <end position="655"/>
    </location>
</feature>
<feature type="compositionally biased region" description="Low complexity" evidence="3">
    <location>
        <begin position="662"/>
        <end position="677"/>
    </location>
</feature>
<feature type="compositionally biased region" description="Low complexity" evidence="3">
    <location>
        <begin position="685"/>
        <end position="700"/>
    </location>
</feature>
<feature type="lipid moiety-binding region" description="GPI-anchor amidated glycine" evidence="2">
    <location>
        <position position="887"/>
    </location>
</feature>
<feature type="glycosylation site" description="N-linked (GlcNAc...) asparagine" evidence="2">
    <location>
        <position position="449"/>
    </location>
</feature>
<feature type="glycosylation site" description="N-linked (GlcNAc...) asparagine" evidence="2">
    <location>
        <position position="462"/>
    </location>
</feature>
<feature type="glycosylation site" description="N-linked (GlcNAc...) asparagine" evidence="2">
    <location>
        <position position="519"/>
    </location>
</feature>
<feature type="glycosylation site" description="N-linked (GlcNAc...) asparagine" evidence="2">
    <location>
        <position position="634"/>
    </location>
</feature>
<feature type="glycosylation site" description="N-linked (GlcNAc...) asparagine" evidence="2">
    <location>
        <position position="684"/>
    </location>
</feature>
<feature type="glycosylation site" description="N-linked (GlcNAc...) asparagine" evidence="2">
    <location>
        <position position="764"/>
    </location>
</feature>
<sequence length="908" mass="93432">MRFATTQLATLACFILTAEATFPLRGLFNDAPVDVDLGVYHEESGNNKEQKVDGFNMSPNIKKRTNENNAANVVSTNGGLFITSTKELKTTVVVTSCFNNVCSETSITTPKTAVTATTSKHSTSKPTYTTTSKHSTSHSSTPASTSKHSTSTSTHPATSEHSTSKSTHATSSKHSTSKSSVSVTTSKHSTHDTTSKSFVTPPASSTTSEHTKHKSHKPSKTVVTLTSCSNNACSQSEITTGAIVVTDKETVYTTYCPLTDTETETESTTATTSKHSTHTTTSKHSSVESTSVTSSSKHSVSKSTDVTTSKHSSSESSHATTMKHSTSKHSTHATTSKHSTTESTSGITSKHSTHATSSKYSTVESSSSFASTSESSVPVSSSKSTTFESSISTTTSKHLTLKSSTPASTLEYSTSIPPAPATTSNSLSTKSTTLTTISRSSTSGSSVPNTTRESSTSTTTPNSSSSESKVSSAIPKYSSSEVSSSATTLKSYSTTHSIPTTLVYSSSTSLGFSVTEFRNLTTTSKSSLSTSTTELLTSGTTVRSSTSESSVTSATSIYTSSESTTSSESTTSIETPKSIASKSSSSVTLPKSSTFAWSTSTTTPESSPITLKLSTSKPPKPSATMESSASTTKNSSIQSTSEATTSGSSGVESSVLTATTKSSVPVTTSEWSSVVTTPKSSAPNTTLEHSTSASETSSGSVYTTFDQSTTVITVTSCSDNLCSKTEVTTGVTVITSDTTSYTTYCPLTGTTTVSSALESLVTANKSTSYVGATPIVSSVVSTTPIISSASTTPIISSASTTSVISSASTTSVISNAISNPVSTDVKPTTSSQGTKSTPVDTDSKSTSETTVMVYTTKSVTPTTVESISVAVSSAAQSSIAAISSYEGTGNNMKLSFGVVIAGVAAFAI</sequence>
<reference key="1">
    <citation type="journal article" date="2004" name="Proc. Natl. Acad. Sci. U.S.A.">
        <title>The diploid genome sequence of Candida albicans.</title>
        <authorList>
            <person name="Jones T."/>
            <person name="Federspiel N.A."/>
            <person name="Chibana H."/>
            <person name="Dungan J."/>
            <person name="Kalman S."/>
            <person name="Magee B.B."/>
            <person name="Newport G."/>
            <person name="Thorstenson Y.R."/>
            <person name="Agabian N."/>
            <person name="Magee P.T."/>
            <person name="Davis R.W."/>
            <person name="Scherer S."/>
        </authorList>
    </citation>
    <scope>NUCLEOTIDE SEQUENCE [LARGE SCALE GENOMIC DNA]</scope>
    <source>
        <strain>SC5314 / ATCC MYA-2876</strain>
    </source>
</reference>
<reference key="2">
    <citation type="journal article" date="2007" name="Genome Biol.">
        <title>Assembly of the Candida albicans genome into sixteen supercontigs aligned on the eight chromosomes.</title>
        <authorList>
            <person name="van het Hoog M."/>
            <person name="Rast T.J."/>
            <person name="Martchenko M."/>
            <person name="Grindle S."/>
            <person name="Dignard D."/>
            <person name="Hogues H."/>
            <person name="Cuomo C."/>
            <person name="Berriman M."/>
            <person name="Scherer S."/>
            <person name="Magee B.B."/>
            <person name="Whiteway M."/>
            <person name="Chibana H."/>
            <person name="Nantel A."/>
            <person name="Magee P.T."/>
        </authorList>
    </citation>
    <scope>GENOME REANNOTATION</scope>
    <source>
        <strain>SC5314 / ATCC MYA-2876</strain>
    </source>
</reference>
<reference key="3">
    <citation type="journal article" date="2013" name="Genome Biol.">
        <title>Assembly of a phased diploid Candida albicans genome facilitates allele-specific measurements and provides a simple model for repeat and indel structure.</title>
        <authorList>
            <person name="Muzzey D."/>
            <person name="Schwartz K."/>
            <person name="Weissman J.S."/>
            <person name="Sherlock G."/>
        </authorList>
    </citation>
    <scope>NUCLEOTIDE SEQUENCE [LARGE SCALE GENOMIC DNA]</scope>
    <scope>GENOME REANNOTATION</scope>
    <source>
        <strain>SC5314 / ATCC MYA-2876</strain>
    </source>
</reference>
<reference key="4">
    <citation type="journal article" date="2003" name="Yeast">
        <title>Genome-wide identification of fungal GPI proteins.</title>
        <authorList>
            <person name="De Groot P.W."/>
            <person name="Hellingwerf K.J."/>
            <person name="Klis F.M."/>
        </authorList>
    </citation>
    <scope>PREDICTION OF GPI-ANCHOR</scope>
</reference>
<reference key="5">
    <citation type="journal article" date="2003" name="Mol. Microbiol.">
        <title>EFG1 is a major regulator of cell wall dynamics in Candida albicans as revealed by DNA microarrays.</title>
        <authorList>
            <person name="Sohn K."/>
            <person name="Urban C."/>
            <person name="Brunner H."/>
            <person name="Rupp S."/>
        </authorList>
    </citation>
    <scope>INDUCTION</scope>
</reference>
<reference key="6">
    <citation type="journal article" date="2005" name="Mol. Biol. Cell">
        <title>Induction of the Candida albicans filamentous growth program by relief of transcriptional repression: a genome-wide analysis.</title>
        <authorList>
            <person name="Kadosh D."/>
            <person name="Johnson A.D."/>
        </authorList>
    </citation>
    <scope>INDUCTION</scope>
</reference>
<reference key="7">
    <citation type="journal article" date="2009" name="Eukaryot. Cell">
        <title>Hwp1 and related adhesins contribute to both mating and biofilm formation in Candida albicans.</title>
        <authorList>
            <person name="Ene I.V."/>
            <person name="Bennett R.J."/>
        </authorList>
    </citation>
    <scope>FUNCTION</scope>
</reference>
<reference key="8">
    <citation type="journal article" date="2010" name="Microbiol. Res.">
        <title>Characterization of Hwp2, a Candida albicans putative GPI-anchored cell wall protein necessary for invasive growth.</title>
        <authorList>
            <person name="Hayek P."/>
            <person name="Dib L."/>
            <person name="Yazbeck P."/>
            <person name="Beyrouthy B."/>
            <person name="Khalaf R.A."/>
        </authorList>
    </citation>
    <scope>FUNCTION</scope>
</reference>
<reference key="9">
    <citation type="journal article" date="2011" name="Microbiol. Res.">
        <title>The Candida albicans Hwp2 is necessary for proper adhesion, biofilm formation and oxidative stress tolerance.</title>
        <authorList>
            <person name="Younes S."/>
            <person name="Bahnan W."/>
            <person name="Dimassi H.I."/>
            <person name="Khalaf R.A."/>
        </authorList>
    </citation>
    <scope>FUNCTION</scope>
</reference>
<reference key="10">
    <citation type="journal article" date="2011" name="Microbiology">
        <title>Hyphal induction in the human fungal pathogen Candida albicans reveals a characteristic wall protein profile.</title>
        <authorList>
            <person name="Heilmann C.J."/>
            <person name="Sorgo A.G."/>
            <person name="Siliakus A.R."/>
            <person name="Dekker H.L."/>
            <person name="Brul S."/>
            <person name="de Koster C.G."/>
            <person name="de Koning L.J."/>
            <person name="Klis F.M."/>
        </authorList>
    </citation>
    <scope>IDENTIFICATION BY MASS SPECTROMETRY</scope>
    <scope>SUBCELLULAR LOCATION</scope>
</reference>
<reference key="11">
    <citation type="journal article" date="2013" name="Microbiology">
        <title>The Candida albicans Hwp2p can complement the lack of filamentation of a Saccharomyces cerevisiae flo11 null strain.</title>
        <authorList>
            <person name="Younes S."/>
            <person name="Khalaf R."/>
        </authorList>
    </citation>
    <scope>FUNCTION</scope>
</reference>
<proteinExistence type="evidence at protein level"/>
<comment type="function">
    <text evidence="6 7 8 10">GPI-anchored cell wall protein required for mating efficiency, biofilm formation, adhesion, filamentous growth, and oxidative stress tolerance. Involved in normal disseminated infection in a mouse systemic candidiasis model.</text>
</comment>
<comment type="subcellular location">
    <subcellularLocation>
        <location evidence="9">Secreted</location>
        <location evidence="9">Cell wall</location>
    </subcellularLocation>
    <subcellularLocation>
        <location evidence="9">Membrane</location>
        <topology evidence="9">Lipid-anchor</topology>
        <topology evidence="9">GPI-anchor</topology>
    </subcellularLocation>
    <text>localizes to the cell wall of hyphae.</text>
</comment>
<comment type="induction">
    <text evidence="4 5">Expressed in hyphae. Regulated by the EFG1 and TUP1 transcription factors.</text>
</comment>
<comment type="PTM">
    <text evidence="1">The GPI-anchor is attached to the protein in the endoplasmic reticulum and serves to target the protein to the cell surface. There, the glucosamine-inositol phospholipid moiety is cleaved off and the GPI-modified mannoprotein is covalently attached via its lipidless GPI glycan remnant to the 1,6-beta-glucan of the outer cell wall layer (By similarity).</text>
</comment>
<keyword id="KW-0130">Cell adhesion</keyword>
<keyword id="KW-0134">Cell wall</keyword>
<keyword id="KW-0325">Glycoprotein</keyword>
<keyword id="KW-0336">GPI-anchor</keyword>
<keyword id="KW-0449">Lipoprotein</keyword>
<keyword id="KW-0472">Membrane</keyword>
<keyword id="KW-1185">Reference proteome</keyword>
<keyword id="KW-0964">Secreted</keyword>
<keyword id="KW-0732">Signal</keyword>
<keyword id="KW-0843">Virulence</keyword>
<dbReference type="EMBL" id="CP017626">
    <property type="protein sequence ID" value="AOW29109.1"/>
    <property type="molecule type" value="Genomic_DNA"/>
</dbReference>
<dbReference type="RefSeq" id="XP_711600.2">
    <property type="nucleotide sequence ID" value="XM_706508.2"/>
</dbReference>
<dbReference type="BioGRID" id="1229883">
    <property type="interactions" value="12"/>
</dbReference>
<dbReference type="STRING" id="237561.Q59PF9"/>
<dbReference type="GlyCosmos" id="Q59PF9">
    <property type="glycosylation" value="6 sites, No reported glycans"/>
</dbReference>
<dbReference type="EnsemblFungi" id="C4_03510C_A-T">
    <property type="protein sequence ID" value="C4_03510C_A-T-p1"/>
    <property type="gene ID" value="C4_03510C_A"/>
</dbReference>
<dbReference type="GeneID" id="3646803"/>
<dbReference type="KEGG" id="cal:CAALFM_C403510CA"/>
<dbReference type="CGD" id="CAL0000197192">
    <property type="gene designation" value="HWP2"/>
</dbReference>
<dbReference type="VEuPathDB" id="FungiDB:C4_03510C_A"/>
<dbReference type="HOGENOM" id="CLU_322093_0_0_1"/>
<dbReference type="InParanoid" id="Q59PF9"/>
<dbReference type="OrthoDB" id="3998251at2759"/>
<dbReference type="PHI-base" id="PHI:11389"/>
<dbReference type="PHI-base" id="PHI:3511"/>
<dbReference type="PRO" id="PR:Q59PF9"/>
<dbReference type="Proteomes" id="UP000000559">
    <property type="component" value="Chromosome 4"/>
</dbReference>
<dbReference type="GO" id="GO:0005576">
    <property type="term" value="C:extracellular region"/>
    <property type="evidence" value="ECO:0007669"/>
    <property type="project" value="UniProtKB-KW"/>
</dbReference>
<dbReference type="GO" id="GO:0030446">
    <property type="term" value="C:hyphal cell wall"/>
    <property type="evidence" value="ECO:0000314"/>
    <property type="project" value="CGD"/>
</dbReference>
<dbReference type="GO" id="GO:0098552">
    <property type="term" value="C:side of membrane"/>
    <property type="evidence" value="ECO:0007669"/>
    <property type="project" value="UniProtKB-KW"/>
</dbReference>
<dbReference type="GO" id="GO:0044406">
    <property type="term" value="P:adhesion of symbiont to host"/>
    <property type="evidence" value="ECO:0000315"/>
    <property type="project" value="CGD"/>
</dbReference>
<dbReference type="GO" id="GO:0007155">
    <property type="term" value="P:cell adhesion"/>
    <property type="evidence" value="ECO:0007669"/>
    <property type="project" value="UniProtKB-KW"/>
</dbReference>
<dbReference type="GO" id="GO:0030447">
    <property type="term" value="P:filamentous growth"/>
    <property type="evidence" value="ECO:0000315"/>
    <property type="project" value="CGD"/>
</dbReference>
<dbReference type="GO" id="GO:0044011">
    <property type="term" value="P:single-species biofilm formation on inanimate substrate"/>
    <property type="evidence" value="ECO:0000315"/>
    <property type="project" value="CGD"/>
</dbReference>
<dbReference type="InterPro" id="IPR025928">
    <property type="entry name" value="Flocculin_t3_rpt"/>
</dbReference>
<dbReference type="Pfam" id="PF13928">
    <property type="entry name" value="Flocculin_t3"/>
    <property type="match status" value="2"/>
</dbReference>
<name>HWP2_CANAL</name>
<accession>Q59PF9</accession>
<accession>A0A1D8PLU3</accession>
<evidence type="ECO:0000250" key="1"/>
<evidence type="ECO:0000255" key="2"/>
<evidence type="ECO:0000256" key="3">
    <source>
        <dbReference type="SAM" id="MobiDB-lite"/>
    </source>
</evidence>
<evidence type="ECO:0000269" key="4">
    <source>
    </source>
</evidence>
<evidence type="ECO:0000269" key="5">
    <source>
    </source>
</evidence>
<evidence type="ECO:0000269" key="6">
    <source>
    </source>
</evidence>
<evidence type="ECO:0000269" key="7">
    <source>
    </source>
</evidence>
<evidence type="ECO:0000269" key="8">
    <source>
    </source>
</evidence>
<evidence type="ECO:0000269" key="9">
    <source>
    </source>
</evidence>
<evidence type="ECO:0000269" key="10">
    <source>
    </source>
</evidence>
<protein>
    <recommendedName>
        <fullName>Hyphal wall protein 2</fullName>
    </recommendedName>
    <alternativeName>
        <fullName>GPI-anchored protein 8</fullName>
    </alternativeName>
</protein>
<organism>
    <name type="scientific">Candida albicans (strain SC5314 / ATCC MYA-2876)</name>
    <name type="common">Yeast</name>
    <dbReference type="NCBI Taxonomy" id="237561"/>
    <lineage>
        <taxon>Eukaryota</taxon>
        <taxon>Fungi</taxon>
        <taxon>Dikarya</taxon>
        <taxon>Ascomycota</taxon>
        <taxon>Saccharomycotina</taxon>
        <taxon>Pichiomycetes</taxon>
        <taxon>Debaryomycetaceae</taxon>
        <taxon>Candida/Lodderomyces clade</taxon>
        <taxon>Candida</taxon>
    </lineage>
</organism>
<gene>
    <name type="primary">HWP2</name>
    <name type="synonym">PGA8</name>
    <name type="ordered locus">CAALFM_C403510CA</name>
    <name type="ORF">CaO19.10888</name>
    <name type="ORF">CaO19.3380</name>
</gene>